<protein>
    <recommendedName>
        <fullName evidence="1">Orotidine 5'-phosphate decarboxylase</fullName>
        <ecNumber evidence="1">4.1.1.23</ecNumber>
    </recommendedName>
    <alternativeName>
        <fullName evidence="1">OMP decarboxylase</fullName>
        <shortName evidence="1">OMPDCase</shortName>
        <shortName evidence="1">OMPdecase</shortName>
    </alternativeName>
</protein>
<sequence>MKFLEKLKQAGNRNKSLLCVGLDPDPKLMPVGMSALEFNREIIEATAPFVCGYKINLAFYEALGKQGWEILSETCEFIPRELITIADAKRGDIGNTSKAYARAILDELDCDGVTVSPYLGYDSLEPFIEYQDKGIFILCLTSNQGSTDFQMLKTEYLGQKRFLYEVVADKASLWNRYENIGLVVGATQQEELKKLRLSYPKLPFLIPGIGAQGGDLKATIENGTNPNGELAIICASRGILYARSGSEFAQGAAEAAEQMRDAINHYRKRF</sequence>
<proteinExistence type="inferred from homology"/>
<feature type="chain" id="PRO_1000066471" description="Orotidine 5'-phosphate decarboxylase">
    <location>
        <begin position="1"/>
        <end position="270"/>
    </location>
</feature>
<feature type="active site" description="Proton donor" evidence="1">
    <location>
        <position position="89"/>
    </location>
</feature>
<keyword id="KW-0210">Decarboxylase</keyword>
<keyword id="KW-0456">Lyase</keyword>
<keyword id="KW-0665">Pyrimidine biosynthesis</keyword>
<name>PYRF_DEHMC</name>
<evidence type="ECO:0000255" key="1">
    <source>
        <dbReference type="HAMAP-Rule" id="MF_01215"/>
    </source>
</evidence>
<dbReference type="EC" id="4.1.1.23" evidence="1"/>
<dbReference type="EMBL" id="AJ965256">
    <property type="protein sequence ID" value="CAI82291.1"/>
    <property type="molecule type" value="Genomic_DNA"/>
</dbReference>
<dbReference type="RefSeq" id="WP_011308650.1">
    <property type="nucleotide sequence ID" value="NC_007356.1"/>
</dbReference>
<dbReference type="SMR" id="Q3ZWB0"/>
<dbReference type="KEGG" id="deh:cbdbA14"/>
<dbReference type="HOGENOM" id="CLU_060704_1_0_0"/>
<dbReference type="UniPathway" id="UPA00070">
    <property type="reaction ID" value="UER00120"/>
</dbReference>
<dbReference type="Proteomes" id="UP000000433">
    <property type="component" value="Chromosome"/>
</dbReference>
<dbReference type="GO" id="GO:0004590">
    <property type="term" value="F:orotidine-5'-phosphate decarboxylase activity"/>
    <property type="evidence" value="ECO:0007669"/>
    <property type="project" value="UniProtKB-UniRule"/>
</dbReference>
<dbReference type="GO" id="GO:0006207">
    <property type="term" value="P:'de novo' pyrimidine nucleobase biosynthetic process"/>
    <property type="evidence" value="ECO:0007669"/>
    <property type="project" value="InterPro"/>
</dbReference>
<dbReference type="GO" id="GO:0044205">
    <property type="term" value="P:'de novo' UMP biosynthetic process"/>
    <property type="evidence" value="ECO:0007669"/>
    <property type="project" value="UniProtKB-UniRule"/>
</dbReference>
<dbReference type="CDD" id="cd04725">
    <property type="entry name" value="OMP_decarboxylase_like"/>
    <property type="match status" value="1"/>
</dbReference>
<dbReference type="FunFam" id="3.20.20.70:FF:000157">
    <property type="entry name" value="Orotidine 5'-phosphate decarboxylase"/>
    <property type="match status" value="1"/>
</dbReference>
<dbReference type="Gene3D" id="3.20.20.70">
    <property type="entry name" value="Aldolase class I"/>
    <property type="match status" value="1"/>
</dbReference>
<dbReference type="HAMAP" id="MF_01215">
    <property type="entry name" value="OMPdecase_type2"/>
    <property type="match status" value="1"/>
</dbReference>
<dbReference type="InterPro" id="IPR013785">
    <property type="entry name" value="Aldolase_TIM"/>
</dbReference>
<dbReference type="InterPro" id="IPR011995">
    <property type="entry name" value="OMPdecase_type-2"/>
</dbReference>
<dbReference type="InterPro" id="IPR001754">
    <property type="entry name" value="OMPdeCOase_dom"/>
</dbReference>
<dbReference type="InterPro" id="IPR011060">
    <property type="entry name" value="RibuloseP-bd_barrel"/>
</dbReference>
<dbReference type="NCBIfam" id="TIGR02127">
    <property type="entry name" value="pyrF_sub2"/>
    <property type="match status" value="1"/>
</dbReference>
<dbReference type="PANTHER" id="PTHR43375">
    <property type="entry name" value="OROTIDINE 5'-PHOSPHATE DECARBOXYLASE"/>
    <property type="match status" value="1"/>
</dbReference>
<dbReference type="PANTHER" id="PTHR43375:SF1">
    <property type="entry name" value="OROTIDINE 5'-PHOSPHATE DECARBOXYLASE"/>
    <property type="match status" value="1"/>
</dbReference>
<dbReference type="Pfam" id="PF00215">
    <property type="entry name" value="OMPdecase"/>
    <property type="match status" value="1"/>
</dbReference>
<dbReference type="SMART" id="SM00934">
    <property type="entry name" value="OMPdecase"/>
    <property type="match status" value="1"/>
</dbReference>
<dbReference type="SUPFAM" id="SSF51366">
    <property type="entry name" value="Ribulose-phoshate binding barrel"/>
    <property type="match status" value="1"/>
</dbReference>
<gene>
    <name evidence="1" type="primary">pyrF</name>
    <name type="ordered locus">cbdbA14</name>
</gene>
<comment type="catalytic activity">
    <reaction evidence="1">
        <text>orotidine 5'-phosphate + H(+) = UMP + CO2</text>
        <dbReference type="Rhea" id="RHEA:11596"/>
        <dbReference type="ChEBI" id="CHEBI:15378"/>
        <dbReference type="ChEBI" id="CHEBI:16526"/>
        <dbReference type="ChEBI" id="CHEBI:57538"/>
        <dbReference type="ChEBI" id="CHEBI:57865"/>
        <dbReference type="EC" id="4.1.1.23"/>
    </reaction>
</comment>
<comment type="pathway">
    <text evidence="1">Pyrimidine metabolism; UMP biosynthesis via de novo pathway; UMP from orotate: step 2/2.</text>
</comment>
<comment type="similarity">
    <text evidence="1">Belongs to the OMP decarboxylase family. Type 2 subfamily.</text>
</comment>
<accession>Q3ZWB0</accession>
<organism>
    <name type="scientific">Dehalococcoides mccartyi (strain CBDB1)</name>
    <dbReference type="NCBI Taxonomy" id="255470"/>
    <lineage>
        <taxon>Bacteria</taxon>
        <taxon>Bacillati</taxon>
        <taxon>Chloroflexota</taxon>
        <taxon>Dehalococcoidia</taxon>
        <taxon>Dehalococcoidales</taxon>
        <taxon>Dehalococcoidaceae</taxon>
        <taxon>Dehalococcoides</taxon>
    </lineage>
</organism>
<reference key="1">
    <citation type="journal article" date="2005" name="Nat. Biotechnol.">
        <title>Genome sequence of the chlorinated compound-respiring bacterium Dehalococcoides species strain CBDB1.</title>
        <authorList>
            <person name="Kube M."/>
            <person name="Beck A."/>
            <person name="Zinder S.H."/>
            <person name="Kuhl H."/>
            <person name="Reinhardt R."/>
            <person name="Adrian L."/>
        </authorList>
    </citation>
    <scope>NUCLEOTIDE SEQUENCE [LARGE SCALE GENOMIC DNA]</scope>
    <source>
        <strain>CBDB1</strain>
    </source>
</reference>